<gene>
    <name evidence="1" type="primary">macB</name>
    <name type="ordered locus">BH15460</name>
</gene>
<proteinExistence type="inferred from homology"/>
<protein>
    <recommendedName>
        <fullName evidence="1">Macrolide export ATP-binding/permease protein MacB</fullName>
        <ecNumber evidence="1">7.6.2.-</ecNumber>
    </recommendedName>
</protein>
<evidence type="ECO:0000255" key="1">
    <source>
        <dbReference type="HAMAP-Rule" id="MF_01720"/>
    </source>
</evidence>
<feature type="chain" id="PRO_0000269921" description="Macrolide export ATP-binding/permease protein MacB">
    <location>
        <begin position="1"/>
        <end position="660"/>
    </location>
</feature>
<feature type="transmembrane region" description="Helical" evidence="1">
    <location>
        <begin position="285"/>
        <end position="305"/>
    </location>
</feature>
<feature type="transmembrane region" description="Helical" evidence="1">
    <location>
        <begin position="532"/>
        <end position="552"/>
    </location>
</feature>
<feature type="transmembrane region" description="Helical" evidence="1">
    <location>
        <begin position="593"/>
        <end position="613"/>
    </location>
</feature>
<feature type="transmembrane region" description="Helical" evidence="1">
    <location>
        <begin position="625"/>
        <end position="645"/>
    </location>
</feature>
<feature type="domain" description="ABC transporter" evidence="1">
    <location>
        <begin position="10"/>
        <end position="248"/>
    </location>
</feature>
<feature type="binding site" evidence="1">
    <location>
        <begin position="46"/>
        <end position="53"/>
    </location>
    <ligand>
        <name>ATP</name>
        <dbReference type="ChEBI" id="CHEBI:30616"/>
    </ligand>
</feature>
<organism>
    <name type="scientific">Bartonella henselae (strain ATCC 49882 / DSM 28221 / CCUG 30454 / Houston 1)</name>
    <name type="common">Rochalimaea henselae</name>
    <dbReference type="NCBI Taxonomy" id="283166"/>
    <lineage>
        <taxon>Bacteria</taxon>
        <taxon>Pseudomonadati</taxon>
        <taxon>Pseudomonadota</taxon>
        <taxon>Alphaproteobacteria</taxon>
        <taxon>Hyphomicrobiales</taxon>
        <taxon>Bartonellaceae</taxon>
        <taxon>Bartonella</taxon>
    </lineage>
</organism>
<keyword id="KW-0046">Antibiotic resistance</keyword>
<keyword id="KW-0067">ATP-binding</keyword>
<keyword id="KW-0997">Cell inner membrane</keyword>
<keyword id="KW-1003">Cell membrane</keyword>
<keyword id="KW-0472">Membrane</keyword>
<keyword id="KW-0547">Nucleotide-binding</keyword>
<keyword id="KW-1278">Translocase</keyword>
<keyword id="KW-0812">Transmembrane</keyword>
<keyword id="KW-1133">Transmembrane helix</keyword>
<keyword id="KW-0813">Transport</keyword>
<dbReference type="EC" id="7.6.2.-" evidence="1"/>
<dbReference type="EMBL" id="BX897699">
    <property type="protein sequence ID" value="CAF28309.1"/>
    <property type="molecule type" value="Genomic_DNA"/>
</dbReference>
<dbReference type="RefSeq" id="WP_011181312.1">
    <property type="nucleotide sequence ID" value="NZ_LRIJ02000001.1"/>
</dbReference>
<dbReference type="SMR" id="Q6G1V5"/>
<dbReference type="PaxDb" id="283166-BH15460"/>
<dbReference type="EnsemblBacteria" id="CAF28309">
    <property type="protein sequence ID" value="CAF28309"/>
    <property type="gene ID" value="BH15460"/>
</dbReference>
<dbReference type="KEGG" id="bhe:BH15460"/>
<dbReference type="eggNOG" id="COG0577">
    <property type="taxonomic scope" value="Bacteria"/>
</dbReference>
<dbReference type="eggNOG" id="COG1136">
    <property type="taxonomic scope" value="Bacteria"/>
</dbReference>
<dbReference type="OrthoDB" id="9770036at2"/>
<dbReference type="Proteomes" id="UP000000421">
    <property type="component" value="Chromosome"/>
</dbReference>
<dbReference type="GO" id="GO:0005886">
    <property type="term" value="C:plasma membrane"/>
    <property type="evidence" value="ECO:0007669"/>
    <property type="project" value="UniProtKB-SubCell"/>
</dbReference>
<dbReference type="GO" id="GO:0005524">
    <property type="term" value="F:ATP binding"/>
    <property type="evidence" value="ECO:0007669"/>
    <property type="project" value="UniProtKB-KW"/>
</dbReference>
<dbReference type="GO" id="GO:0016887">
    <property type="term" value="F:ATP hydrolysis activity"/>
    <property type="evidence" value="ECO:0007669"/>
    <property type="project" value="InterPro"/>
</dbReference>
<dbReference type="GO" id="GO:0022857">
    <property type="term" value="F:transmembrane transporter activity"/>
    <property type="evidence" value="ECO:0007669"/>
    <property type="project" value="TreeGrafter"/>
</dbReference>
<dbReference type="GO" id="GO:0046677">
    <property type="term" value="P:response to antibiotic"/>
    <property type="evidence" value="ECO:0007669"/>
    <property type="project" value="UniProtKB-KW"/>
</dbReference>
<dbReference type="CDD" id="cd03255">
    <property type="entry name" value="ABC_MJ0796_LolCDE_FtsE"/>
    <property type="match status" value="1"/>
</dbReference>
<dbReference type="FunFam" id="3.40.50.300:FF:000032">
    <property type="entry name" value="Export ABC transporter ATP-binding protein"/>
    <property type="match status" value="1"/>
</dbReference>
<dbReference type="Gene3D" id="3.40.50.300">
    <property type="entry name" value="P-loop containing nucleotide triphosphate hydrolases"/>
    <property type="match status" value="1"/>
</dbReference>
<dbReference type="InterPro" id="IPR003593">
    <property type="entry name" value="AAA+_ATPase"/>
</dbReference>
<dbReference type="InterPro" id="IPR003838">
    <property type="entry name" value="ABC3_permease_C"/>
</dbReference>
<dbReference type="InterPro" id="IPR003439">
    <property type="entry name" value="ABC_transporter-like_ATP-bd"/>
</dbReference>
<dbReference type="InterPro" id="IPR017871">
    <property type="entry name" value="ABC_transporter-like_CS"/>
</dbReference>
<dbReference type="InterPro" id="IPR017911">
    <property type="entry name" value="MacB-like_ATP-bd"/>
</dbReference>
<dbReference type="InterPro" id="IPR025857">
    <property type="entry name" value="MacB_PCD"/>
</dbReference>
<dbReference type="InterPro" id="IPR050250">
    <property type="entry name" value="Macrolide_Exporter_MacB"/>
</dbReference>
<dbReference type="InterPro" id="IPR027417">
    <property type="entry name" value="P-loop_NTPase"/>
</dbReference>
<dbReference type="PANTHER" id="PTHR30572:SF14">
    <property type="entry name" value="MACROLIDE EXPORT ATP-BINDING_PERMEASE PROTEIN MACB"/>
    <property type="match status" value="1"/>
</dbReference>
<dbReference type="PANTHER" id="PTHR30572">
    <property type="entry name" value="MEMBRANE COMPONENT OF TRANSPORTER-RELATED"/>
    <property type="match status" value="1"/>
</dbReference>
<dbReference type="Pfam" id="PF00005">
    <property type="entry name" value="ABC_tran"/>
    <property type="match status" value="1"/>
</dbReference>
<dbReference type="Pfam" id="PF02687">
    <property type="entry name" value="FtsX"/>
    <property type="match status" value="1"/>
</dbReference>
<dbReference type="Pfam" id="PF12704">
    <property type="entry name" value="MacB_PCD"/>
    <property type="match status" value="1"/>
</dbReference>
<dbReference type="SMART" id="SM00382">
    <property type="entry name" value="AAA"/>
    <property type="match status" value="1"/>
</dbReference>
<dbReference type="SUPFAM" id="SSF52540">
    <property type="entry name" value="P-loop containing nucleoside triphosphate hydrolases"/>
    <property type="match status" value="1"/>
</dbReference>
<dbReference type="PROSITE" id="PS00211">
    <property type="entry name" value="ABC_TRANSPORTER_1"/>
    <property type="match status" value="1"/>
</dbReference>
<dbReference type="PROSITE" id="PS50893">
    <property type="entry name" value="ABC_TRANSPORTER_2"/>
    <property type="match status" value="1"/>
</dbReference>
<dbReference type="PROSITE" id="PS51267">
    <property type="entry name" value="MACB"/>
    <property type="match status" value="1"/>
</dbReference>
<name>MACB_BARHE</name>
<sequence>MKAKQADAVLVLENIVRKFPAGETFVTVLKDINLTIKRGEMVAIVGASGSGKSTLMNILGCLDRPTFGRYWISGKETASLSADELSALRRNHFGFIFQRYHLLNELTALGNVEIPAVYAGYAPEVRRKRAEDLLTRLGMRDRIHHRPNQLSGGQQQRVSIARALMNNAEVILADEPTGALDKKSGQEVLRILDELHQEGRTIIMVTHDMQVAERADRIIEISDGEIIADNVSKVAKTKTDSQALYGKQVLKDQKTLGFFRSFAERFREAFVMALLAMNAHRMRTFLTMLGVIIGIGAIIAMVALGNGTREKILENFKSLGSNTLTILPGKSLSDPQAEKITSLVEADAEALSKLPYVSGVTPQMSASSTIRFGSVEADVVIAGVGEQYFQTQGLNAVQGRLFDQKSVHDRAIDLVIEKEALAVLFPHSHESPLGKVVHVGNVPVRIVGVIDPQHNGGTSSTLQVYLPYTTVQTRFLGTTQVRAITVKIADTVDSNLAETMVRRFLIMRHGEEDFFIRNSQLFRDRIMESTHILTLLVSSIAAISLIVGGIGVMNIMLVTVSERINEIGVRMAVGARQSDILQQFLIEAILVCVIGGGLGILFGMSIGGLFLLFKAPIHLIYTIDSIILSLTFSTLIGVCFGFSPARQASRLDPVVALSRD</sequence>
<reference key="1">
    <citation type="journal article" date="2004" name="Proc. Natl. Acad. Sci. U.S.A.">
        <title>The louse-borne human pathogen Bartonella quintana is a genomic derivative of the zoonotic agent Bartonella henselae.</title>
        <authorList>
            <person name="Alsmark U.C.M."/>
            <person name="Frank A.C."/>
            <person name="Karlberg E.O."/>
            <person name="Legault B.-A."/>
            <person name="Ardell D.H."/>
            <person name="Canbaeck B."/>
            <person name="Eriksson A.-S."/>
            <person name="Naeslund A.K."/>
            <person name="Handley S.A."/>
            <person name="Huvet M."/>
            <person name="La Scola B."/>
            <person name="Holmberg M."/>
            <person name="Andersson S.G.E."/>
        </authorList>
    </citation>
    <scope>NUCLEOTIDE SEQUENCE [LARGE SCALE GENOMIC DNA]</scope>
    <source>
        <strain>ATCC 49882 / DSM 28221 / CCUG 30454 / Houston 1</strain>
    </source>
</reference>
<accession>Q6G1V5</accession>
<comment type="function">
    <text evidence="1">Non-canonical ABC transporter that contains transmembrane domains (TMD), which form a pore in the inner membrane, and an ATP-binding domain (NBD), which is responsible for energy generation. Confers resistance against macrolides.</text>
</comment>
<comment type="subunit">
    <text evidence="1">Homodimer.</text>
</comment>
<comment type="subcellular location">
    <subcellularLocation>
        <location evidence="1">Cell inner membrane</location>
        <topology evidence="1">Multi-pass membrane protein</topology>
    </subcellularLocation>
</comment>
<comment type="similarity">
    <text evidence="1">Belongs to the ABC transporter superfamily. Macrolide exporter (TC 3.A.1.122) family.</text>
</comment>